<keyword id="KW-0963">Cytoplasm</keyword>
<keyword id="KW-0251">Elongation factor</keyword>
<keyword id="KW-0648">Protein biosynthesis</keyword>
<accession>A3PJM6</accession>
<sequence length="298" mass="31120">MAITAQMVKELRESTGAGMMDAKKALTETDGDMEAAVDWLRTKGLAKAAKKAGRTAAEGLVGVCVDGGTGVAVEVNSETDFVAKNADFQSMVTGFTKAALTVDDIEALKAADMGGKTVETTLQETIAVIGENMTLRRMAKISGDSVAAYVHNAAADGLGKIGVLVAVKGADNGIAKQVAMHIAATNPMALSEADLDPTVVERERTVQTQKALEENAASAKPKPDAVIENNIIPGRMKKFLEENTLLGQKFVINPDLTVAEAAKQAGVEIVGFVRMAVGEGIEKEKEDFAAEVAKTLAG</sequence>
<gene>
    <name evidence="1" type="primary">tsf</name>
    <name type="ordered locus">Rsph17029_1432</name>
</gene>
<protein>
    <recommendedName>
        <fullName evidence="1">Elongation factor Ts</fullName>
        <shortName evidence="1">EF-Ts</shortName>
    </recommendedName>
</protein>
<comment type="function">
    <text evidence="1">Associates with the EF-Tu.GDP complex and induces the exchange of GDP to GTP. It remains bound to the aminoacyl-tRNA.EF-Tu.GTP complex up to the GTP hydrolysis stage on the ribosome.</text>
</comment>
<comment type="subcellular location">
    <subcellularLocation>
        <location evidence="1">Cytoplasm</location>
    </subcellularLocation>
</comment>
<comment type="similarity">
    <text evidence="1">Belongs to the EF-Ts family.</text>
</comment>
<name>EFTS_CERS1</name>
<organism>
    <name type="scientific">Cereibacter sphaeroides (strain ATCC 17029 / ATH 2.4.9)</name>
    <name type="common">Rhodobacter sphaeroides</name>
    <dbReference type="NCBI Taxonomy" id="349101"/>
    <lineage>
        <taxon>Bacteria</taxon>
        <taxon>Pseudomonadati</taxon>
        <taxon>Pseudomonadota</taxon>
        <taxon>Alphaproteobacteria</taxon>
        <taxon>Rhodobacterales</taxon>
        <taxon>Paracoccaceae</taxon>
        <taxon>Cereibacter</taxon>
    </lineage>
</organism>
<evidence type="ECO:0000255" key="1">
    <source>
        <dbReference type="HAMAP-Rule" id="MF_00050"/>
    </source>
</evidence>
<reference key="1">
    <citation type="submission" date="2007-02" db="EMBL/GenBank/DDBJ databases">
        <title>Complete sequence of chromosome 1 of Rhodobacter sphaeroides ATCC 17029.</title>
        <authorList>
            <person name="Copeland A."/>
            <person name="Lucas S."/>
            <person name="Lapidus A."/>
            <person name="Barry K."/>
            <person name="Detter J.C."/>
            <person name="Glavina del Rio T."/>
            <person name="Hammon N."/>
            <person name="Israni S."/>
            <person name="Dalin E."/>
            <person name="Tice H."/>
            <person name="Pitluck S."/>
            <person name="Kiss H."/>
            <person name="Brettin T."/>
            <person name="Bruce D."/>
            <person name="Han C."/>
            <person name="Tapia R."/>
            <person name="Gilna P."/>
            <person name="Schmutz J."/>
            <person name="Larimer F."/>
            <person name="Land M."/>
            <person name="Hauser L."/>
            <person name="Kyrpides N."/>
            <person name="Mikhailova N."/>
            <person name="Richardson P."/>
            <person name="Mackenzie C."/>
            <person name="Choudhary M."/>
            <person name="Donohue T.J."/>
            <person name="Kaplan S."/>
        </authorList>
    </citation>
    <scope>NUCLEOTIDE SEQUENCE [LARGE SCALE GENOMIC DNA]</scope>
    <source>
        <strain>ATCC 17029 / ATH 2.4.9</strain>
    </source>
</reference>
<dbReference type="EMBL" id="CP000577">
    <property type="protein sequence ID" value="ABN76542.1"/>
    <property type="molecule type" value="Genomic_DNA"/>
</dbReference>
<dbReference type="RefSeq" id="WP_002719943.1">
    <property type="nucleotide sequence ID" value="NC_009049.1"/>
</dbReference>
<dbReference type="SMR" id="A3PJM6"/>
<dbReference type="GeneID" id="67446526"/>
<dbReference type="KEGG" id="rsh:Rsph17029_1432"/>
<dbReference type="HOGENOM" id="CLU_047155_2_0_5"/>
<dbReference type="GO" id="GO:0005737">
    <property type="term" value="C:cytoplasm"/>
    <property type="evidence" value="ECO:0007669"/>
    <property type="project" value="UniProtKB-SubCell"/>
</dbReference>
<dbReference type="GO" id="GO:0003746">
    <property type="term" value="F:translation elongation factor activity"/>
    <property type="evidence" value="ECO:0007669"/>
    <property type="project" value="UniProtKB-UniRule"/>
</dbReference>
<dbReference type="CDD" id="cd14275">
    <property type="entry name" value="UBA_EF-Ts"/>
    <property type="match status" value="1"/>
</dbReference>
<dbReference type="FunFam" id="1.10.8.10:FF:000001">
    <property type="entry name" value="Elongation factor Ts"/>
    <property type="match status" value="1"/>
</dbReference>
<dbReference type="Gene3D" id="1.10.286.20">
    <property type="match status" value="1"/>
</dbReference>
<dbReference type="Gene3D" id="1.10.8.10">
    <property type="entry name" value="DNA helicase RuvA subunit, C-terminal domain"/>
    <property type="match status" value="1"/>
</dbReference>
<dbReference type="Gene3D" id="3.30.479.20">
    <property type="entry name" value="Elongation factor Ts, dimerisation domain"/>
    <property type="match status" value="2"/>
</dbReference>
<dbReference type="HAMAP" id="MF_00050">
    <property type="entry name" value="EF_Ts"/>
    <property type="match status" value="1"/>
</dbReference>
<dbReference type="InterPro" id="IPR036402">
    <property type="entry name" value="EF-Ts_dimer_sf"/>
</dbReference>
<dbReference type="InterPro" id="IPR001816">
    <property type="entry name" value="Transl_elong_EFTs/EF1B"/>
</dbReference>
<dbReference type="InterPro" id="IPR014039">
    <property type="entry name" value="Transl_elong_EFTs/EF1B_dimer"/>
</dbReference>
<dbReference type="InterPro" id="IPR018101">
    <property type="entry name" value="Transl_elong_Ts_CS"/>
</dbReference>
<dbReference type="InterPro" id="IPR009060">
    <property type="entry name" value="UBA-like_sf"/>
</dbReference>
<dbReference type="NCBIfam" id="TIGR00116">
    <property type="entry name" value="tsf"/>
    <property type="match status" value="1"/>
</dbReference>
<dbReference type="PANTHER" id="PTHR11741">
    <property type="entry name" value="ELONGATION FACTOR TS"/>
    <property type="match status" value="1"/>
</dbReference>
<dbReference type="PANTHER" id="PTHR11741:SF0">
    <property type="entry name" value="ELONGATION FACTOR TS, MITOCHONDRIAL"/>
    <property type="match status" value="1"/>
</dbReference>
<dbReference type="Pfam" id="PF00889">
    <property type="entry name" value="EF_TS"/>
    <property type="match status" value="1"/>
</dbReference>
<dbReference type="SUPFAM" id="SSF54713">
    <property type="entry name" value="Elongation factor Ts (EF-Ts), dimerisation domain"/>
    <property type="match status" value="2"/>
</dbReference>
<dbReference type="SUPFAM" id="SSF46934">
    <property type="entry name" value="UBA-like"/>
    <property type="match status" value="1"/>
</dbReference>
<dbReference type="PROSITE" id="PS01126">
    <property type="entry name" value="EF_TS_1"/>
    <property type="match status" value="1"/>
</dbReference>
<dbReference type="PROSITE" id="PS01127">
    <property type="entry name" value="EF_TS_2"/>
    <property type="match status" value="1"/>
</dbReference>
<feature type="chain" id="PRO_1000006162" description="Elongation factor Ts">
    <location>
        <begin position="1"/>
        <end position="298"/>
    </location>
</feature>
<feature type="region of interest" description="Involved in Mg(2+) ion dislocation from EF-Tu" evidence="1">
    <location>
        <begin position="79"/>
        <end position="82"/>
    </location>
</feature>
<proteinExistence type="inferred from homology"/>